<gene>
    <name evidence="1" type="primary">rpoC</name>
    <name type="ordered locus">LBL_0744</name>
</gene>
<keyword id="KW-0240">DNA-directed RNA polymerase</keyword>
<keyword id="KW-0460">Magnesium</keyword>
<keyword id="KW-0479">Metal-binding</keyword>
<keyword id="KW-0548">Nucleotidyltransferase</keyword>
<keyword id="KW-0804">Transcription</keyword>
<keyword id="KW-0808">Transferase</keyword>
<keyword id="KW-0862">Zinc</keyword>
<sequence>MRSHNDFESITIRLASPERIKEWSYGEVKKPETINYRTLKPEKDGLFCEKIFGTTKDWECYCGKFKSIRYKGVICDKCGVEVTHSKVRRERMGHIELAAPVSHIWYYRSVPSRMGLLLDMTVNQLKSVLYFEKYVIIDPADSGRSRGELIDEEEYHGYLDEYGDKFVAGIGADAIKELLARIDVDAEARMIRQKIQDKDKISDKRILKRLEVLEAFRDSGNRPEWMVLDIVPVIPPELRPMVQLEGGRFATSDLNDLYRRVINRNNRLKRLLALKAPEIIVRNEKRMLQEAVDALFDNSRRKRAVKGKGNRPLKSISDMLKGKQGRFRQNLLGKRVDYSGRSVIVVGPELKYHEMGLPKKMALELFKPFIMKRLVDLDLAPNIKSAKKKVEAEDKEVFDVLEYVVKEHPVMLNRAPTLHRLGIQAFLPVLVEGKAIKLHPLVCHAFNADFDGDQMAIHVPLTPKAQLETWMLMLSPHNILNPANGHPICGPTQDIVLGIYYLTSELPSEPGAPLKSFSNLDEVHYAIDRGVVEFRTKISVYHQGKILETTPGRLIFNTILPEGYAYVNRPLSDKETNRIIADVYDKYGPAKTVLMLDDIKKLGYRYATLFVPTISIEDIRVSPGKVGLVGDANKEVEKADSEYRKGIITNEERRKKVIEIWTKTNDLITESMFKELEKDKGGFNPVFIMAASGARGSKQQIRQLAGMRGLMAKPSGEIIELAIRSNFREGLSVLEFFISTHGARKGLADTALKTADAGYLTRRLVDISQDVIISEDDCGTEESISLGIVKEGENVIVSLNDRVFGRYTAEDVIDPVTDKVVYPRNTLITREVGQKVENLGYDKIRVRSPLTCESKQGVCIRCYGMDMARLIPAEIGEAVGTIAAQSIGQPGTQLTMRTFHIGGAASAKVQEKEHKVSYTGIVNNINGRLITNEKSQSVFSRRGSIVIQRLIQQYKTEELSNLRVENGQKVDKGELVATSPSGENITSAMPGAVHIENGIFRILGEEAVIPVKTGTVVNVKVNDITQPNQPLAEFDPYNEVGISEIDGTVQWMDLEIGKNVRRDEDLRTSNILLKVIEQRREKLNPRIAVISGGSREEYSVPVDAIISVQDGDKVKAGDILFKIPTVAEKTRDITGGLPRVDELFEARRPKDATTLAETDGKIEISGEIVKEKRVLYIHPDNPDQEKVKVTIPIGKQIRVRNGDFVKRGDQIDDGNLDPHDILRVKGVTALQVYLVQEVQEVYRLQGVHINDKHIEVVVRQMLRKVLITDSGDTSFVNQQQIDRLMFNEENKRVIAEGGSPAESVPILLGLTKASLNTESFFSAASFQETTKVLTDAAIKGKTDNLMGLKENVIIGHMIPAGTGTKKYKDISVFKSAYGDLDRPLEEEEEEEIPQSIADDSDGDE</sequence>
<feature type="chain" id="PRO_0000308849" description="DNA-directed RNA polymerase subunit beta'">
    <location>
        <begin position="1"/>
        <end position="1404"/>
    </location>
</feature>
<feature type="region of interest" description="Disordered" evidence="2">
    <location>
        <begin position="1381"/>
        <end position="1404"/>
    </location>
</feature>
<feature type="compositionally biased region" description="Acidic residues" evidence="2">
    <location>
        <begin position="1384"/>
        <end position="1404"/>
    </location>
</feature>
<feature type="binding site" evidence="1">
    <location>
        <position position="60"/>
    </location>
    <ligand>
        <name>Zn(2+)</name>
        <dbReference type="ChEBI" id="CHEBI:29105"/>
        <label>1</label>
    </ligand>
</feature>
<feature type="binding site" evidence="1">
    <location>
        <position position="62"/>
    </location>
    <ligand>
        <name>Zn(2+)</name>
        <dbReference type="ChEBI" id="CHEBI:29105"/>
        <label>1</label>
    </ligand>
</feature>
<feature type="binding site" evidence="1">
    <location>
        <position position="75"/>
    </location>
    <ligand>
        <name>Zn(2+)</name>
        <dbReference type="ChEBI" id="CHEBI:29105"/>
        <label>1</label>
    </ligand>
</feature>
<feature type="binding site" evidence="1">
    <location>
        <position position="78"/>
    </location>
    <ligand>
        <name>Zn(2+)</name>
        <dbReference type="ChEBI" id="CHEBI:29105"/>
        <label>1</label>
    </ligand>
</feature>
<feature type="binding site" evidence="1">
    <location>
        <position position="449"/>
    </location>
    <ligand>
        <name>Mg(2+)</name>
        <dbReference type="ChEBI" id="CHEBI:18420"/>
    </ligand>
</feature>
<feature type="binding site" evidence="1">
    <location>
        <position position="451"/>
    </location>
    <ligand>
        <name>Mg(2+)</name>
        <dbReference type="ChEBI" id="CHEBI:18420"/>
    </ligand>
</feature>
<feature type="binding site" evidence="1">
    <location>
        <position position="453"/>
    </location>
    <ligand>
        <name>Mg(2+)</name>
        <dbReference type="ChEBI" id="CHEBI:18420"/>
    </ligand>
</feature>
<feature type="binding site" evidence="1">
    <location>
        <position position="778"/>
    </location>
    <ligand>
        <name>Zn(2+)</name>
        <dbReference type="ChEBI" id="CHEBI:29105"/>
        <label>2</label>
    </ligand>
</feature>
<feature type="binding site" evidence="1">
    <location>
        <position position="852"/>
    </location>
    <ligand>
        <name>Zn(2+)</name>
        <dbReference type="ChEBI" id="CHEBI:29105"/>
        <label>2</label>
    </ligand>
</feature>
<feature type="binding site" evidence="1">
    <location>
        <position position="859"/>
    </location>
    <ligand>
        <name>Zn(2+)</name>
        <dbReference type="ChEBI" id="CHEBI:29105"/>
        <label>2</label>
    </ligand>
</feature>
<feature type="binding site" evidence="1">
    <location>
        <position position="862"/>
    </location>
    <ligand>
        <name>Zn(2+)</name>
        <dbReference type="ChEBI" id="CHEBI:29105"/>
        <label>2</label>
    </ligand>
</feature>
<dbReference type="EC" id="2.7.7.6" evidence="1"/>
<dbReference type="EMBL" id="CP000348">
    <property type="protein sequence ID" value="ABJ78304.1"/>
    <property type="molecule type" value="Genomic_DNA"/>
</dbReference>
<dbReference type="RefSeq" id="WP_011669622.1">
    <property type="nucleotide sequence ID" value="NC_008508.1"/>
</dbReference>
<dbReference type="SMR" id="Q054E1"/>
<dbReference type="KEGG" id="lbl:LBL_0744"/>
<dbReference type="PATRIC" id="fig|355276.3.peg.938"/>
<dbReference type="HOGENOM" id="CLU_000524_3_1_12"/>
<dbReference type="GO" id="GO:0000428">
    <property type="term" value="C:DNA-directed RNA polymerase complex"/>
    <property type="evidence" value="ECO:0007669"/>
    <property type="project" value="UniProtKB-KW"/>
</dbReference>
<dbReference type="GO" id="GO:0003677">
    <property type="term" value="F:DNA binding"/>
    <property type="evidence" value="ECO:0007669"/>
    <property type="project" value="UniProtKB-UniRule"/>
</dbReference>
<dbReference type="GO" id="GO:0003899">
    <property type="term" value="F:DNA-directed RNA polymerase activity"/>
    <property type="evidence" value="ECO:0007669"/>
    <property type="project" value="UniProtKB-UniRule"/>
</dbReference>
<dbReference type="GO" id="GO:0000287">
    <property type="term" value="F:magnesium ion binding"/>
    <property type="evidence" value="ECO:0007669"/>
    <property type="project" value="UniProtKB-UniRule"/>
</dbReference>
<dbReference type="GO" id="GO:0008270">
    <property type="term" value="F:zinc ion binding"/>
    <property type="evidence" value="ECO:0007669"/>
    <property type="project" value="UniProtKB-UniRule"/>
</dbReference>
<dbReference type="GO" id="GO:0006351">
    <property type="term" value="P:DNA-templated transcription"/>
    <property type="evidence" value="ECO:0007669"/>
    <property type="project" value="UniProtKB-UniRule"/>
</dbReference>
<dbReference type="CDD" id="cd02655">
    <property type="entry name" value="RNAP_beta'_C"/>
    <property type="match status" value="1"/>
</dbReference>
<dbReference type="CDD" id="cd01609">
    <property type="entry name" value="RNAP_beta'_N"/>
    <property type="match status" value="1"/>
</dbReference>
<dbReference type="FunFam" id="4.10.860.120:FF:000001">
    <property type="entry name" value="DNA-directed RNA polymerase subunit beta"/>
    <property type="match status" value="1"/>
</dbReference>
<dbReference type="Gene3D" id="1.10.132.30">
    <property type="match status" value="1"/>
</dbReference>
<dbReference type="Gene3D" id="1.10.150.390">
    <property type="match status" value="1"/>
</dbReference>
<dbReference type="Gene3D" id="1.10.1790.20">
    <property type="match status" value="1"/>
</dbReference>
<dbReference type="Gene3D" id="1.10.40.90">
    <property type="match status" value="1"/>
</dbReference>
<dbReference type="Gene3D" id="2.40.40.20">
    <property type="match status" value="1"/>
</dbReference>
<dbReference type="Gene3D" id="2.40.50.100">
    <property type="match status" value="2"/>
</dbReference>
<dbReference type="Gene3D" id="4.10.860.120">
    <property type="entry name" value="RNA polymerase II, clamp domain"/>
    <property type="match status" value="1"/>
</dbReference>
<dbReference type="Gene3D" id="1.10.274.100">
    <property type="entry name" value="RNA polymerase Rpb1, domain 3"/>
    <property type="match status" value="1"/>
</dbReference>
<dbReference type="HAMAP" id="MF_01322">
    <property type="entry name" value="RNApol_bact_RpoC"/>
    <property type="match status" value="1"/>
</dbReference>
<dbReference type="InterPro" id="IPR045867">
    <property type="entry name" value="DNA-dir_RpoC_beta_prime"/>
</dbReference>
<dbReference type="InterPro" id="IPR012754">
    <property type="entry name" value="DNA-dir_RpoC_beta_prime_bact"/>
</dbReference>
<dbReference type="InterPro" id="IPR000722">
    <property type="entry name" value="RNA_pol_asu"/>
</dbReference>
<dbReference type="InterPro" id="IPR006592">
    <property type="entry name" value="RNA_pol_N"/>
</dbReference>
<dbReference type="InterPro" id="IPR007080">
    <property type="entry name" value="RNA_pol_Rpb1_1"/>
</dbReference>
<dbReference type="InterPro" id="IPR007066">
    <property type="entry name" value="RNA_pol_Rpb1_3"/>
</dbReference>
<dbReference type="InterPro" id="IPR042102">
    <property type="entry name" value="RNA_pol_Rpb1_3_sf"/>
</dbReference>
<dbReference type="InterPro" id="IPR007083">
    <property type="entry name" value="RNA_pol_Rpb1_4"/>
</dbReference>
<dbReference type="InterPro" id="IPR007081">
    <property type="entry name" value="RNA_pol_Rpb1_5"/>
</dbReference>
<dbReference type="InterPro" id="IPR044893">
    <property type="entry name" value="RNA_pol_Rpb1_clamp_domain"/>
</dbReference>
<dbReference type="InterPro" id="IPR038120">
    <property type="entry name" value="Rpb1_funnel_sf"/>
</dbReference>
<dbReference type="NCBIfam" id="TIGR02386">
    <property type="entry name" value="rpoC_TIGR"/>
    <property type="match status" value="1"/>
</dbReference>
<dbReference type="PANTHER" id="PTHR19376">
    <property type="entry name" value="DNA-DIRECTED RNA POLYMERASE"/>
    <property type="match status" value="1"/>
</dbReference>
<dbReference type="PANTHER" id="PTHR19376:SF54">
    <property type="entry name" value="DNA-DIRECTED RNA POLYMERASE SUBUNIT BETA"/>
    <property type="match status" value="1"/>
</dbReference>
<dbReference type="Pfam" id="PF04997">
    <property type="entry name" value="RNA_pol_Rpb1_1"/>
    <property type="match status" value="1"/>
</dbReference>
<dbReference type="Pfam" id="PF00623">
    <property type="entry name" value="RNA_pol_Rpb1_2"/>
    <property type="match status" value="2"/>
</dbReference>
<dbReference type="Pfam" id="PF04983">
    <property type="entry name" value="RNA_pol_Rpb1_3"/>
    <property type="match status" value="1"/>
</dbReference>
<dbReference type="Pfam" id="PF05000">
    <property type="entry name" value="RNA_pol_Rpb1_4"/>
    <property type="match status" value="1"/>
</dbReference>
<dbReference type="Pfam" id="PF04998">
    <property type="entry name" value="RNA_pol_Rpb1_5"/>
    <property type="match status" value="1"/>
</dbReference>
<dbReference type="SMART" id="SM00663">
    <property type="entry name" value="RPOLA_N"/>
    <property type="match status" value="1"/>
</dbReference>
<dbReference type="SUPFAM" id="SSF64484">
    <property type="entry name" value="beta and beta-prime subunits of DNA dependent RNA-polymerase"/>
    <property type="match status" value="1"/>
</dbReference>
<name>RPOC_LEPBL</name>
<organism>
    <name type="scientific">Leptospira borgpetersenii serovar Hardjo-bovis (strain L550)</name>
    <dbReference type="NCBI Taxonomy" id="355276"/>
    <lineage>
        <taxon>Bacteria</taxon>
        <taxon>Pseudomonadati</taxon>
        <taxon>Spirochaetota</taxon>
        <taxon>Spirochaetia</taxon>
        <taxon>Leptospirales</taxon>
        <taxon>Leptospiraceae</taxon>
        <taxon>Leptospira</taxon>
    </lineage>
</organism>
<proteinExistence type="inferred from homology"/>
<protein>
    <recommendedName>
        <fullName evidence="1">DNA-directed RNA polymerase subunit beta'</fullName>
        <shortName evidence="1">RNAP subunit beta'</shortName>
        <ecNumber evidence="1">2.7.7.6</ecNumber>
    </recommendedName>
    <alternativeName>
        <fullName evidence="1">RNA polymerase subunit beta'</fullName>
    </alternativeName>
    <alternativeName>
        <fullName evidence="1">Transcriptase subunit beta'</fullName>
    </alternativeName>
</protein>
<comment type="function">
    <text evidence="1">DNA-dependent RNA polymerase catalyzes the transcription of DNA into RNA using the four ribonucleoside triphosphates as substrates.</text>
</comment>
<comment type="catalytic activity">
    <reaction evidence="1">
        <text>RNA(n) + a ribonucleoside 5'-triphosphate = RNA(n+1) + diphosphate</text>
        <dbReference type="Rhea" id="RHEA:21248"/>
        <dbReference type="Rhea" id="RHEA-COMP:14527"/>
        <dbReference type="Rhea" id="RHEA-COMP:17342"/>
        <dbReference type="ChEBI" id="CHEBI:33019"/>
        <dbReference type="ChEBI" id="CHEBI:61557"/>
        <dbReference type="ChEBI" id="CHEBI:140395"/>
        <dbReference type="EC" id="2.7.7.6"/>
    </reaction>
</comment>
<comment type="cofactor">
    <cofactor evidence="1">
        <name>Mg(2+)</name>
        <dbReference type="ChEBI" id="CHEBI:18420"/>
    </cofactor>
    <text evidence="1">Binds 1 Mg(2+) ion per subunit.</text>
</comment>
<comment type="cofactor">
    <cofactor evidence="1">
        <name>Zn(2+)</name>
        <dbReference type="ChEBI" id="CHEBI:29105"/>
    </cofactor>
    <text evidence="1">Binds 2 Zn(2+) ions per subunit.</text>
</comment>
<comment type="subunit">
    <text evidence="1">The RNAP catalytic core consists of 2 alpha, 1 beta, 1 beta' and 1 omega subunit. When a sigma factor is associated with the core the holoenzyme is formed, which can initiate transcription.</text>
</comment>
<comment type="similarity">
    <text evidence="1">Belongs to the RNA polymerase beta' chain family.</text>
</comment>
<reference key="1">
    <citation type="journal article" date="2006" name="Proc. Natl. Acad. Sci. U.S.A.">
        <title>Genome reduction in Leptospira borgpetersenii reflects limited transmission potential.</title>
        <authorList>
            <person name="Bulach D.M."/>
            <person name="Zuerner R.L."/>
            <person name="Wilson P."/>
            <person name="Seemann T."/>
            <person name="McGrath A."/>
            <person name="Cullen P.A."/>
            <person name="Davis J."/>
            <person name="Johnson M."/>
            <person name="Kuczek E."/>
            <person name="Alt D.P."/>
            <person name="Peterson-Burch B."/>
            <person name="Coppel R.L."/>
            <person name="Rood J.I."/>
            <person name="Davies J.K."/>
            <person name="Adler B."/>
        </authorList>
    </citation>
    <scope>NUCLEOTIDE SEQUENCE [LARGE SCALE GENOMIC DNA]</scope>
    <source>
        <strain>L550</strain>
    </source>
</reference>
<accession>Q054E1</accession>
<evidence type="ECO:0000255" key="1">
    <source>
        <dbReference type="HAMAP-Rule" id="MF_01322"/>
    </source>
</evidence>
<evidence type="ECO:0000256" key="2">
    <source>
        <dbReference type="SAM" id="MobiDB-lite"/>
    </source>
</evidence>